<reference key="1">
    <citation type="journal article" date="2008" name="Genome Res.">
        <title>Comparative genome analysis of Salmonella enteritidis PT4 and Salmonella gallinarum 287/91 provides insights into evolutionary and host adaptation pathways.</title>
        <authorList>
            <person name="Thomson N.R."/>
            <person name="Clayton D.J."/>
            <person name="Windhorst D."/>
            <person name="Vernikos G."/>
            <person name="Davidson S."/>
            <person name="Churcher C."/>
            <person name="Quail M.A."/>
            <person name="Stevens M."/>
            <person name="Jones M.A."/>
            <person name="Watson M."/>
            <person name="Barron A."/>
            <person name="Layton A."/>
            <person name="Pickard D."/>
            <person name="Kingsley R.A."/>
            <person name="Bignell A."/>
            <person name="Clark L."/>
            <person name="Harris B."/>
            <person name="Ormond D."/>
            <person name="Abdellah Z."/>
            <person name="Brooks K."/>
            <person name="Cherevach I."/>
            <person name="Chillingworth T."/>
            <person name="Woodward J."/>
            <person name="Norberczak H."/>
            <person name="Lord A."/>
            <person name="Arrowsmith C."/>
            <person name="Jagels K."/>
            <person name="Moule S."/>
            <person name="Mungall K."/>
            <person name="Saunders M."/>
            <person name="Whitehead S."/>
            <person name="Chabalgoity J.A."/>
            <person name="Maskell D."/>
            <person name="Humphreys T."/>
            <person name="Roberts M."/>
            <person name="Barrow P.A."/>
            <person name="Dougan G."/>
            <person name="Parkhill J."/>
        </authorList>
    </citation>
    <scope>NUCLEOTIDE SEQUENCE [LARGE SCALE GENOMIC DNA]</scope>
    <source>
        <strain>P125109</strain>
    </source>
</reference>
<proteinExistence type="inferred from homology"/>
<organism>
    <name type="scientific">Salmonella enteritidis PT4 (strain P125109)</name>
    <dbReference type="NCBI Taxonomy" id="550537"/>
    <lineage>
        <taxon>Bacteria</taxon>
        <taxon>Pseudomonadati</taxon>
        <taxon>Pseudomonadota</taxon>
        <taxon>Gammaproteobacteria</taxon>
        <taxon>Enterobacterales</taxon>
        <taxon>Enterobacteriaceae</taxon>
        <taxon>Salmonella</taxon>
    </lineage>
</organism>
<keyword id="KW-0687">Ribonucleoprotein</keyword>
<keyword id="KW-0689">Ribosomal protein</keyword>
<comment type="function">
    <text evidence="1">Forms part of the ribosomal stalk which helps the ribosome interact with GTP-bound translation factors. Is thus essential for accurate translation.</text>
</comment>
<comment type="subunit">
    <text evidence="1">Homodimer. Part of the ribosomal stalk of the 50S ribosomal subunit. Forms a multimeric L10(L12)X complex, where L10 forms an elongated spine to which 2 to 4 L12 dimers bind in a sequential fashion. Binds GTP-bound translation factors.</text>
</comment>
<comment type="similarity">
    <text evidence="1">Belongs to the bacterial ribosomal protein bL12 family.</text>
</comment>
<dbReference type="EMBL" id="AM933172">
    <property type="protein sequence ID" value="CAR35507.1"/>
    <property type="molecule type" value="Genomic_DNA"/>
</dbReference>
<dbReference type="RefSeq" id="WP_000028882.1">
    <property type="nucleotide sequence ID" value="NC_011294.1"/>
</dbReference>
<dbReference type="SMR" id="B5QYD7"/>
<dbReference type="GeneID" id="89551069"/>
<dbReference type="KEGG" id="set:SEN3936"/>
<dbReference type="HOGENOM" id="CLU_086499_3_2_6"/>
<dbReference type="Proteomes" id="UP000000613">
    <property type="component" value="Chromosome"/>
</dbReference>
<dbReference type="GO" id="GO:0022625">
    <property type="term" value="C:cytosolic large ribosomal subunit"/>
    <property type="evidence" value="ECO:0007669"/>
    <property type="project" value="TreeGrafter"/>
</dbReference>
<dbReference type="GO" id="GO:0003729">
    <property type="term" value="F:mRNA binding"/>
    <property type="evidence" value="ECO:0007669"/>
    <property type="project" value="TreeGrafter"/>
</dbReference>
<dbReference type="GO" id="GO:0003735">
    <property type="term" value="F:structural constituent of ribosome"/>
    <property type="evidence" value="ECO:0007669"/>
    <property type="project" value="InterPro"/>
</dbReference>
<dbReference type="GO" id="GO:0006412">
    <property type="term" value="P:translation"/>
    <property type="evidence" value="ECO:0007669"/>
    <property type="project" value="UniProtKB-UniRule"/>
</dbReference>
<dbReference type="CDD" id="cd00387">
    <property type="entry name" value="Ribosomal_L7_L12"/>
    <property type="match status" value="1"/>
</dbReference>
<dbReference type="FunFam" id="1.20.5.710:FF:000001">
    <property type="entry name" value="50S ribosomal protein L7/L12"/>
    <property type="match status" value="1"/>
</dbReference>
<dbReference type="FunFam" id="3.30.1390.10:FF:000001">
    <property type="entry name" value="50S ribosomal protein L7/L12"/>
    <property type="match status" value="1"/>
</dbReference>
<dbReference type="Gene3D" id="3.30.1390.10">
    <property type="match status" value="1"/>
</dbReference>
<dbReference type="Gene3D" id="1.20.5.710">
    <property type="entry name" value="Single helix bin"/>
    <property type="match status" value="1"/>
</dbReference>
<dbReference type="HAMAP" id="MF_00368">
    <property type="entry name" value="Ribosomal_bL12"/>
    <property type="match status" value="1"/>
</dbReference>
<dbReference type="InterPro" id="IPR000206">
    <property type="entry name" value="Ribosomal_bL12"/>
</dbReference>
<dbReference type="InterPro" id="IPR013823">
    <property type="entry name" value="Ribosomal_bL12_C"/>
</dbReference>
<dbReference type="InterPro" id="IPR014719">
    <property type="entry name" value="Ribosomal_bL12_C/ClpS-like"/>
</dbReference>
<dbReference type="InterPro" id="IPR008932">
    <property type="entry name" value="Ribosomal_bL12_oligo"/>
</dbReference>
<dbReference type="InterPro" id="IPR036235">
    <property type="entry name" value="Ribosomal_bL12_oligo_N_sf"/>
</dbReference>
<dbReference type="NCBIfam" id="TIGR00855">
    <property type="entry name" value="L12"/>
    <property type="match status" value="1"/>
</dbReference>
<dbReference type="PANTHER" id="PTHR45987">
    <property type="entry name" value="39S RIBOSOMAL PROTEIN L12"/>
    <property type="match status" value="1"/>
</dbReference>
<dbReference type="PANTHER" id="PTHR45987:SF4">
    <property type="entry name" value="LARGE RIBOSOMAL SUBUNIT PROTEIN BL12M"/>
    <property type="match status" value="1"/>
</dbReference>
<dbReference type="Pfam" id="PF00542">
    <property type="entry name" value="Ribosomal_L12"/>
    <property type="match status" value="1"/>
</dbReference>
<dbReference type="Pfam" id="PF16320">
    <property type="entry name" value="Ribosomal_L12_N"/>
    <property type="match status" value="1"/>
</dbReference>
<dbReference type="SUPFAM" id="SSF54736">
    <property type="entry name" value="ClpS-like"/>
    <property type="match status" value="1"/>
</dbReference>
<dbReference type="SUPFAM" id="SSF48300">
    <property type="entry name" value="Ribosomal protein L7/12, oligomerisation (N-terminal) domain"/>
    <property type="match status" value="1"/>
</dbReference>
<feature type="chain" id="PRO_1000121483" description="Large ribosomal subunit protein bL12">
    <location>
        <begin position="1"/>
        <end position="121"/>
    </location>
</feature>
<accession>B5QYD7</accession>
<sequence>MSITKDQIIEAVSAMSVMDVVELISAMEEKFGVSAAAAVAVAAGPAEAAEEKTEFDVILKAAGANKVAVIKAVRGATGLGLKEAKDLVESAPAALKEGVSKDDAEALKKSLEEAGAEVEVK</sequence>
<gene>
    <name evidence="1" type="primary">rplL</name>
    <name type="ordered locus">SEN3936</name>
</gene>
<protein>
    <recommendedName>
        <fullName evidence="1">Large ribosomal subunit protein bL12</fullName>
    </recommendedName>
    <alternativeName>
        <fullName evidence="2">50S ribosomal protein L7/L12</fullName>
    </alternativeName>
</protein>
<evidence type="ECO:0000255" key="1">
    <source>
        <dbReference type="HAMAP-Rule" id="MF_00368"/>
    </source>
</evidence>
<evidence type="ECO:0000305" key="2"/>
<name>RL7_SALEP</name>